<evidence type="ECO:0000255" key="1">
    <source>
        <dbReference type="HAMAP-Rule" id="MF_00129"/>
    </source>
</evidence>
<sequence>MDFPSRFEVIVIGGGHAGTEAALASARMGVKTLLLTHNVETLGQMSCNPAIGGIGKSHLVKEIDALGGAMAMATDKGGIQFRVLNSRKGPAVRATRAQADRVLYKAAIRETLENQPNLWIFQQACDDLIVEQDQVRGVVTQMGMRIFADSVVLTTGTFLGGLIHIGMQNYSGGRAGDPPSIALAQRLRELPLRVGRLKTGTPPRIDGRSVDFSVMTEQPGDTPIPVMSFLGNKEQHPPQVSCWITHTNARTHEIIASNLDRSPMYSGVIEGIGPRYCPSIEDKIHRFADKESHQVFIEPEGLTTHELYPNGISTSLPFDVQLQIVQSIRGMENAHIVRPGYAIEYDYFDPRDLKYSLETKVIGGLFFAGQINGTTGYEEAGAQGLLAGTNAALRAQGRDSWCPRRDEAYIGVLVDDLITLGTQEPYRMFTSRAEYRLILREDNADLRLTEKGRELGLVDDARWAAFCTKRESIELEEQRLKSTWVRPGTAQGDAIAEHFGTPLTHEYNLLNLLTRPEIDYASLIAITGQGCTDPQVAEQVEIKTKYSGYIDRQQDEIARLRASEDTRLPEDIDYAAISGLSKEIQSKLGITRPETLGQASRIPGVTPAAISLLMIHLKKRGAGRQLEQSA</sequence>
<accession>Q48BF4</accession>
<organism>
    <name type="scientific">Pseudomonas savastanoi pv. phaseolicola (strain 1448A / Race 6)</name>
    <name type="common">Pseudomonas syringae pv. phaseolicola (strain 1448A / Race 6)</name>
    <dbReference type="NCBI Taxonomy" id="264730"/>
    <lineage>
        <taxon>Bacteria</taxon>
        <taxon>Pseudomonadati</taxon>
        <taxon>Pseudomonadota</taxon>
        <taxon>Gammaproteobacteria</taxon>
        <taxon>Pseudomonadales</taxon>
        <taxon>Pseudomonadaceae</taxon>
        <taxon>Pseudomonas</taxon>
    </lineage>
</organism>
<protein>
    <recommendedName>
        <fullName evidence="1">tRNA uridine 5-carboxymethylaminomethyl modification enzyme MnmG</fullName>
    </recommendedName>
    <alternativeName>
        <fullName evidence="1">Glucose-inhibited division protein A</fullName>
    </alternativeName>
</protein>
<reference key="1">
    <citation type="journal article" date="2005" name="J. Bacteriol.">
        <title>Whole-genome sequence analysis of Pseudomonas syringae pv. phaseolicola 1448A reveals divergence among pathovars in genes involved in virulence and transposition.</title>
        <authorList>
            <person name="Joardar V."/>
            <person name="Lindeberg M."/>
            <person name="Jackson R.W."/>
            <person name="Selengut J."/>
            <person name="Dodson R."/>
            <person name="Brinkac L.M."/>
            <person name="Daugherty S.C."/>
            <person name="DeBoy R.T."/>
            <person name="Durkin A.S."/>
            <person name="Gwinn Giglio M."/>
            <person name="Madupu R."/>
            <person name="Nelson W.C."/>
            <person name="Rosovitz M.J."/>
            <person name="Sullivan S.A."/>
            <person name="Crabtree J."/>
            <person name="Creasy T."/>
            <person name="Davidsen T.M."/>
            <person name="Haft D.H."/>
            <person name="Zafar N."/>
            <person name="Zhou L."/>
            <person name="Halpin R."/>
            <person name="Holley T."/>
            <person name="Khouri H.M."/>
            <person name="Feldblyum T.V."/>
            <person name="White O."/>
            <person name="Fraser C.M."/>
            <person name="Chatterjee A.K."/>
            <person name="Cartinhour S."/>
            <person name="Schneider D."/>
            <person name="Mansfield J.W."/>
            <person name="Collmer A."/>
            <person name="Buell R."/>
        </authorList>
    </citation>
    <scope>NUCLEOTIDE SEQUENCE [LARGE SCALE GENOMIC DNA]</scope>
    <source>
        <strain>1448A / Race 6</strain>
    </source>
</reference>
<keyword id="KW-0963">Cytoplasm</keyword>
<keyword id="KW-0274">FAD</keyword>
<keyword id="KW-0285">Flavoprotein</keyword>
<keyword id="KW-0520">NAD</keyword>
<keyword id="KW-0819">tRNA processing</keyword>
<proteinExistence type="inferred from homology"/>
<name>MNMG_PSE14</name>
<dbReference type="EMBL" id="CP000058">
    <property type="protein sequence ID" value="AAZ34210.1"/>
    <property type="molecule type" value="Genomic_DNA"/>
</dbReference>
<dbReference type="RefSeq" id="WP_011169941.1">
    <property type="nucleotide sequence ID" value="NC_005773.3"/>
</dbReference>
<dbReference type="SMR" id="Q48BF4"/>
<dbReference type="KEGG" id="psp:PSPPH_5218"/>
<dbReference type="eggNOG" id="COG0445">
    <property type="taxonomic scope" value="Bacteria"/>
</dbReference>
<dbReference type="HOGENOM" id="CLU_007831_2_2_6"/>
<dbReference type="Proteomes" id="UP000000551">
    <property type="component" value="Chromosome"/>
</dbReference>
<dbReference type="GO" id="GO:0005829">
    <property type="term" value="C:cytosol"/>
    <property type="evidence" value="ECO:0007669"/>
    <property type="project" value="TreeGrafter"/>
</dbReference>
<dbReference type="GO" id="GO:0050660">
    <property type="term" value="F:flavin adenine dinucleotide binding"/>
    <property type="evidence" value="ECO:0007669"/>
    <property type="project" value="UniProtKB-UniRule"/>
</dbReference>
<dbReference type="GO" id="GO:0030488">
    <property type="term" value="P:tRNA methylation"/>
    <property type="evidence" value="ECO:0007669"/>
    <property type="project" value="TreeGrafter"/>
</dbReference>
<dbReference type="GO" id="GO:0002098">
    <property type="term" value="P:tRNA wobble uridine modification"/>
    <property type="evidence" value="ECO:0007669"/>
    <property type="project" value="InterPro"/>
</dbReference>
<dbReference type="FunFam" id="1.10.10.1800:FF:000001">
    <property type="entry name" value="tRNA uridine 5-carboxymethylaminomethyl modification enzyme MnmG"/>
    <property type="match status" value="1"/>
</dbReference>
<dbReference type="FunFam" id="1.10.150.570:FF:000001">
    <property type="entry name" value="tRNA uridine 5-carboxymethylaminomethyl modification enzyme MnmG"/>
    <property type="match status" value="1"/>
</dbReference>
<dbReference type="FunFam" id="3.50.50.60:FF:000002">
    <property type="entry name" value="tRNA uridine 5-carboxymethylaminomethyl modification enzyme MnmG"/>
    <property type="match status" value="1"/>
</dbReference>
<dbReference type="FunFam" id="3.50.50.60:FF:000010">
    <property type="entry name" value="tRNA uridine 5-carboxymethylaminomethyl modification enzyme MnmG"/>
    <property type="match status" value="1"/>
</dbReference>
<dbReference type="Gene3D" id="3.50.50.60">
    <property type="entry name" value="FAD/NAD(P)-binding domain"/>
    <property type="match status" value="2"/>
</dbReference>
<dbReference type="Gene3D" id="1.10.150.570">
    <property type="entry name" value="GidA associated domain, C-terminal subdomain"/>
    <property type="match status" value="1"/>
</dbReference>
<dbReference type="Gene3D" id="1.10.10.1800">
    <property type="entry name" value="tRNA uridine 5-carboxymethylaminomethyl modification enzyme MnmG/GidA"/>
    <property type="match status" value="1"/>
</dbReference>
<dbReference type="HAMAP" id="MF_00129">
    <property type="entry name" value="MnmG_GidA"/>
    <property type="match status" value="1"/>
</dbReference>
<dbReference type="InterPro" id="IPR036188">
    <property type="entry name" value="FAD/NAD-bd_sf"/>
</dbReference>
<dbReference type="InterPro" id="IPR049312">
    <property type="entry name" value="GIDA_C_N"/>
</dbReference>
<dbReference type="InterPro" id="IPR004416">
    <property type="entry name" value="MnmG"/>
</dbReference>
<dbReference type="InterPro" id="IPR002218">
    <property type="entry name" value="MnmG-rel"/>
</dbReference>
<dbReference type="InterPro" id="IPR020595">
    <property type="entry name" value="MnmG-rel_CS"/>
</dbReference>
<dbReference type="InterPro" id="IPR026904">
    <property type="entry name" value="MnmG_C"/>
</dbReference>
<dbReference type="InterPro" id="IPR047001">
    <property type="entry name" value="MnmG_C_subdom"/>
</dbReference>
<dbReference type="InterPro" id="IPR044920">
    <property type="entry name" value="MnmG_C_subdom_sf"/>
</dbReference>
<dbReference type="InterPro" id="IPR040131">
    <property type="entry name" value="MnmG_N"/>
</dbReference>
<dbReference type="NCBIfam" id="TIGR00136">
    <property type="entry name" value="mnmG_gidA"/>
    <property type="match status" value="1"/>
</dbReference>
<dbReference type="PANTHER" id="PTHR11806">
    <property type="entry name" value="GLUCOSE INHIBITED DIVISION PROTEIN A"/>
    <property type="match status" value="1"/>
</dbReference>
<dbReference type="PANTHER" id="PTHR11806:SF0">
    <property type="entry name" value="PROTEIN MTO1 HOMOLOG, MITOCHONDRIAL"/>
    <property type="match status" value="1"/>
</dbReference>
<dbReference type="Pfam" id="PF01134">
    <property type="entry name" value="GIDA"/>
    <property type="match status" value="1"/>
</dbReference>
<dbReference type="Pfam" id="PF21680">
    <property type="entry name" value="GIDA_C_1st"/>
    <property type="match status" value="1"/>
</dbReference>
<dbReference type="Pfam" id="PF13932">
    <property type="entry name" value="SAM_GIDA_C"/>
    <property type="match status" value="1"/>
</dbReference>
<dbReference type="SMART" id="SM01228">
    <property type="entry name" value="GIDA_assoc_3"/>
    <property type="match status" value="1"/>
</dbReference>
<dbReference type="SUPFAM" id="SSF51905">
    <property type="entry name" value="FAD/NAD(P)-binding domain"/>
    <property type="match status" value="1"/>
</dbReference>
<dbReference type="PROSITE" id="PS01280">
    <property type="entry name" value="GIDA_1"/>
    <property type="match status" value="1"/>
</dbReference>
<dbReference type="PROSITE" id="PS01281">
    <property type="entry name" value="GIDA_2"/>
    <property type="match status" value="1"/>
</dbReference>
<gene>
    <name evidence="1" type="primary">mnmG</name>
    <name evidence="1" type="synonym">gidA</name>
    <name type="ordered locus">PSPPH_5218</name>
</gene>
<feature type="chain" id="PRO_1000016641" description="tRNA uridine 5-carboxymethylaminomethyl modification enzyme MnmG">
    <location>
        <begin position="1"/>
        <end position="630"/>
    </location>
</feature>
<feature type="binding site" evidence="1">
    <location>
        <begin position="13"/>
        <end position="18"/>
    </location>
    <ligand>
        <name>FAD</name>
        <dbReference type="ChEBI" id="CHEBI:57692"/>
    </ligand>
</feature>
<feature type="binding site" evidence="1">
    <location>
        <begin position="273"/>
        <end position="287"/>
    </location>
    <ligand>
        <name>NAD(+)</name>
        <dbReference type="ChEBI" id="CHEBI:57540"/>
    </ligand>
</feature>
<comment type="function">
    <text evidence="1">NAD-binding protein involved in the addition of a carboxymethylaminomethyl (cmnm) group at the wobble position (U34) of certain tRNAs, forming tRNA-cmnm(5)s(2)U34.</text>
</comment>
<comment type="cofactor">
    <cofactor evidence="1">
        <name>FAD</name>
        <dbReference type="ChEBI" id="CHEBI:57692"/>
    </cofactor>
</comment>
<comment type="subunit">
    <text evidence="1">Homodimer. Heterotetramer of two MnmE and two MnmG subunits.</text>
</comment>
<comment type="subcellular location">
    <subcellularLocation>
        <location evidence="1">Cytoplasm</location>
    </subcellularLocation>
</comment>
<comment type="similarity">
    <text evidence="1">Belongs to the MnmG family.</text>
</comment>